<name>PSBN_ARAHI</name>
<protein>
    <recommendedName>
        <fullName evidence="1">Protein PsbN</fullName>
    </recommendedName>
</protein>
<feature type="chain" id="PRO_0000362176" description="Protein PsbN">
    <location>
        <begin position="1"/>
        <end position="43"/>
    </location>
</feature>
<feature type="transmembrane region" description="Helical" evidence="1">
    <location>
        <begin position="7"/>
        <end position="27"/>
    </location>
</feature>
<dbReference type="EMBL" id="AP009369">
    <property type="protein sequence ID" value="BAF50051.1"/>
    <property type="molecule type" value="Genomic_DNA"/>
</dbReference>
<dbReference type="RefSeq" id="YP_001123227.1">
    <property type="nucleotide sequence ID" value="NC_009268.1"/>
</dbReference>
<dbReference type="SMR" id="A4QK46"/>
<dbReference type="GeneID" id="4962587"/>
<dbReference type="GO" id="GO:0009535">
    <property type="term" value="C:chloroplast thylakoid membrane"/>
    <property type="evidence" value="ECO:0007669"/>
    <property type="project" value="UniProtKB-SubCell"/>
</dbReference>
<dbReference type="GO" id="GO:0015979">
    <property type="term" value="P:photosynthesis"/>
    <property type="evidence" value="ECO:0007669"/>
    <property type="project" value="InterPro"/>
</dbReference>
<dbReference type="HAMAP" id="MF_00293">
    <property type="entry name" value="PSII_PsbN"/>
    <property type="match status" value="1"/>
</dbReference>
<dbReference type="InterPro" id="IPR003398">
    <property type="entry name" value="PSII_PsbN"/>
</dbReference>
<dbReference type="PANTHER" id="PTHR35326">
    <property type="entry name" value="PROTEIN PSBN"/>
    <property type="match status" value="1"/>
</dbReference>
<dbReference type="PANTHER" id="PTHR35326:SF3">
    <property type="entry name" value="PROTEIN PSBN"/>
    <property type="match status" value="1"/>
</dbReference>
<dbReference type="Pfam" id="PF02468">
    <property type="entry name" value="PsbN"/>
    <property type="match status" value="1"/>
</dbReference>
<evidence type="ECO:0000255" key="1">
    <source>
        <dbReference type="HAMAP-Rule" id="MF_00293"/>
    </source>
</evidence>
<proteinExistence type="inferred from homology"/>
<comment type="function">
    <text evidence="1">May play a role in photosystem I and II biogenesis.</text>
</comment>
<comment type="subcellular location">
    <subcellularLocation>
        <location evidence="1">Plastid</location>
        <location evidence="1">Chloroplast thylakoid membrane</location>
        <topology evidence="1">Single-pass membrane protein</topology>
    </subcellularLocation>
</comment>
<comment type="similarity">
    <text evidence="1">Belongs to the PsbN family.</text>
</comment>
<comment type="caution">
    <text evidence="1">Originally thought to be a component of PSII; based on experiments in Synechocystis, N.tabacum and barley, and its absence from PSII in T.elongatus and T.vulcanus, this is probably not true.</text>
</comment>
<organism>
    <name type="scientific">Arabis hirsuta</name>
    <name type="common">Hairy rock-cress</name>
    <name type="synonym">Turritis hirsuta</name>
    <dbReference type="NCBI Taxonomy" id="78191"/>
    <lineage>
        <taxon>Eukaryota</taxon>
        <taxon>Viridiplantae</taxon>
        <taxon>Streptophyta</taxon>
        <taxon>Embryophyta</taxon>
        <taxon>Tracheophyta</taxon>
        <taxon>Spermatophyta</taxon>
        <taxon>Magnoliopsida</taxon>
        <taxon>eudicotyledons</taxon>
        <taxon>Gunneridae</taxon>
        <taxon>Pentapetalae</taxon>
        <taxon>rosids</taxon>
        <taxon>malvids</taxon>
        <taxon>Brassicales</taxon>
        <taxon>Brassicaceae</taxon>
        <taxon>Arabideae</taxon>
        <taxon>Arabis</taxon>
    </lineage>
</organism>
<sequence length="43" mass="4722">METATLVAIFISGLLVSFTGYALYTAFGQPSQQLRDPFEEHGD</sequence>
<gene>
    <name evidence="1" type="primary">psbN</name>
</gene>
<keyword id="KW-0150">Chloroplast</keyword>
<keyword id="KW-0472">Membrane</keyword>
<keyword id="KW-0934">Plastid</keyword>
<keyword id="KW-0793">Thylakoid</keyword>
<keyword id="KW-0812">Transmembrane</keyword>
<keyword id="KW-1133">Transmembrane helix</keyword>
<geneLocation type="chloroplast"/>
<reference key="1">
    <citation type="submission" date="2007-03" db="EMBL/GenBank/DDBJ databases">
        <title>Sequencing analysis of Arabis hirsuta chloroplast DNA.</title>
        <authorList>
            <person name="Hosouchi T."/>
            <person name="Tsuruoka H."/>
            <person name="Kotani H."/>
        </authorList>
    </citation>
    <scope>NUCLEOTIDE SEQUENCE [LARGE SCALE GENOMIC DNA]</scope>
</reference>
<accession>A4QK46</accession>